<dbReference type="EMBL" id="AC006070">
    <property type="status" value="NOT_ANNOTATED_CDS"/>
    <property type="molecule type" value="Genomic_DNA"/>
</dbReference>
<dbReference type="EMBL" id="AJ406935">
    <property type="protein sequence ID" value="CAC27574.1"/>
    <property type="molecule type" value="mRNA"/>
</dbReference>
<dbReference type="CCDS" id="CCDS42331.1"/>
<dbReference type="RefSeq" id="NP_149443.1">
    <property type="nucleotide sequence ID" value="NM_033187.2"/>
</dbReference>
<dbReference type="FunCoup" id="Q9BYR4">
    <property type="interactions" value="19"/>
</dbReference>
<dbReference type="IntAct" id="Q9BYR4">
    <property type="interactions" value="1"/>
</dbReference>
<dbReference type="STRING" id="9606.ENSP00000375151"/>
<dbReference type="BioMuta" id="KRTAP4-3"/>
<dbReference type="DMDM" id="158519999"/>
<dbReference type="MassIVE" id="Q9BYR4"/>
<dbReference type="PaxDb" id="9606-ENSP00000375151"/>
<dbReference type="PeptideAtlas" id="Q9BYR4"/>
<dbReference type="ProteomicsDB" id="79693"/>
<dbReference type="Ensembl" id="ENST00000391356.4">
    <property type="protein sequence ID" value="ENSP00000375151.2"/>
    <property type="gene ID" value="ENSG00000196156.5"/>
</dbReference>
<dbReference type="GeneID" id="85290"/>
<dbReference type="KEGG" id="hsa:85290"/>
<dbReference type="MANE-Select" id="ENST00000391356.4">
    <property type="protein sequence ID" value="ENSP00000375151.2"/>
    <property type="RefSeq nucleotide sequence ID" value="NM_033187.2"/>
    <property type="RefSeq protein sequence ID" value="NP_149443.1"/>
</dbReference>
<dbReference type="UCSC" id="uc010cxl.4">
    <property type="organism name" value="human"/>
</dbReference>
<dbReference type="AGR" id="HGNC:18908"/>
<dbReference type="CTD" id="85290"/>
<dbReference type="GeneCards" id="KRTAP4-3"/>
<dbReference type="HGNC" id="HGNC:18908">
    <property type="gene designation" value="KRTAP4-3"/>
</dbReference>
<dbReference type="HPA" id="ENSG00000196156">
    <property type="expression patterns" value="Tissue enriched (skin)"/>
</dbReference>
<dbReference type="neXtProt" id="NX_Q9BYR4"/>
<dbReference type="OpenTargets" id="ENSG00000196156"/>
<dbReference type="PharmGKB" id="PA38756"/>
<dbReference type="VEuPathDB" id="HostDB:ENSG00000196156"/>
<dbReference type="eggNOG" id="KOG4726">
    <property type="taxonomic scope" value="Eukaryota"/>
</dbReference>
<dbReference type="GeneTree" id="ENSGT00940000154448"/>
<dbReference type="HOGENOM" id="CLU_113141_2_0_1"/>
<dbReference type="InParanoid" id="Q9BYR4"/>
<dbReference type="OMA" id="LWCRSCC"/>
<dbReference type="PAN-GO" id="Q9BYR4">
    <property type="GO annotations" value="0 GO annotations based on evolutionary models"/>
</dbReference>
<dbReference type="TreeFam" id="TF351356"/>
<dbReference type="PathwayCommons" id="Q9BYR4"/>
<dbReference type="Reactome" id="R-HSA-6805567">
    <property type="pathway name" value="Keratinization"/>
</dbReference>
<dbReference type="BioGRID-ORCS" id="85290">
    <property type="hits" value="14 hits in 780 CRISPR screens"/>
</dbReference>
<dbReference type="GenomeRNAi" id="85290"/>
<dbReference type="Pharos" id="Q9BYR4">
    <property type="development level" value="Tbio"/>
</dbReference>
<dbReference type="PRO" id="PR:Q9BYR4"/>
<dbReference type="Proteomes" id="UP000005640">
    <property type="component" value="Chromosome 17"/>
</dbReference>
<dbReference type="RNAct" id="Q9BYR4">
    <property type="molecule type" value="protein"/>
</dbReference>
<dbReference type="Bgee" id="ENSG00000196156">
    <property type="expression patterns" value="Expressed in upper arm skin and 24 other cell types or tissues"/>
</dbReference>
<dbReference type="GO" id="GO:0005829">
    <property type="term" value="C:cytosol"/>
    <property type="evidence" value="ECO:0000304"/>
    <property type="project" value="Reactome"/>
</dbReference>
<dbReference type="GO" id="GO:0045095">
    <property type="term" value="C:keratin filament"/>
    <property type="evidence" value="ECO:0007669"/>
    <property type="project" value="InterPro"/>
</dbReference>
<dbReference type="GO" id="GO:0042633">
    <property type="term" value="P:hair cycle"/>
    <property type="evidence" value="ECO:0000314"/>
    <property type="project" value="UniProtKB"/>
</dbReference>
<dbReference type="InterPro" id="IPR002494">
    <property type="entry name" value="KAP"/>
</dbReference>
<dbReference type="PANTHER" id="PTHR23262">
    <property type="entry name" value="KERATIN ASSOCIATED PROTEIN"/>
    <property type="match status" value="1"/>
</dbReference>
<dbReference type="PANTHER" id="PTHR23262:SF248">
    <property type="entry name" value="KERATIN-ASSOCIATED PROTEIN 4-6"/>
    <property type="match status" value="1"/>
</dbReference>
<dbReference type="Pfam" id="PF13885">
    <property type="entry name" value="Keratin_B2_2"/>
    <property type="match status" value="3"/>
</dbReference>
<accession>Q9BYR4</accession>
<reference key="1">
    <citation type="journal article" date="2006" name="Nature">
        <title>DNA sequence of human chromosome 17 and analysis of rearrangement in the human lineage.</title>
        <authorList>
            <person name="Zody M.C."/>
            <person name="Garber M."/>
            <person name="Adams D.J."/>
            <person name="Sharpe T."/>
            <person name="Harrow J."/>
            <person name="Lupski J.R."/>
            <person name="Nicholson C."/>
            <person name="Searle S.M."/>
            <person name="Wilming L."/>
            <person name="Young S.K."/>
            <person name="Abouelleil A."/>
            <person name="Allen N.R."/>
            <person name="Bi W."/>
            <person name="Bloom T."/>
            <person name="Borowsky M.L."/>
            <person name="Bugalter B.E."/>
            <person name="Butler J."/>
            <person name="Chang J.L."/>
            <person name="Chen C.-K."/>
            <person name="Cook A."/>
            <person name="Corum B."/>
            <person name="Cuomo C.A."/>
            <person name="de Jong P.J."/>
            <person name="DeCaprio D."/>
            <person name="Dewar K."/>
            <person name="FitzGerald M."/>
            <person name="Gilbert J."/>
            <person name="Gibson R."/>
            <person name="Gnerre S."/>
            <person name="Goldstein S."/>
            <person name="Grafham D.V."/>
            <person name="Grocock R."/>
            <person name="Hafez N."/>
            <person name="Hagopian D.S."/>
            <person name="Hart E."/>
            <person name="Norman C.H."/>
            <person name="Humphray S."/>
            <person name="Jaffe D.B."/>
            <person name="Jones M."/>
            <person name="Kamal M."/>
            <person name="Khodiyar V.K."/>
            <person name="LaButti K."/>
            <person name="Laird G."/>
            <person name="Lehoczky J."/>
            <person name="Liu X."/>
            <person name="Lokyitsang T."/>
            <person name="Loveland J."/>
            <person name="Lui A."/>
            <person name="Macdonald P."/>
            <person name="Major J.E."/>
            <person name="Matthews L."/>
            <person name="Mauceli E."/>
            <person name="McCarroll S.A."/>
            <person name="Mihalev A.H."/>
            <person name="Mudge J."/>
            <person name="Nguyen C."/>
            <person name="Nicol R."/>
            <person name="O'Leary S.B."/>
            <person name="Osoegawa K."/>
            <person name="Schwartz D.C."/>
            <person name="Shaw-Smith C."/>
            <person name="Stankiewicz P."/>
            <person name="Steward C."/>
            <person name="Swarbreck D."/>
            <person name="Venkataraman V."/>
            <person name="Whittaker C.A."/>
            <person name="Yang X."/>
            <person name="Zimmer A.R."/>
            <person name="Bradley A."/>
            <person name="Hubbard T."/>
            <person name="Birren B.W."/>
            <person name="Rogers J."/>
            <person name="Lander E.S."/>
            <person name="Nusbaum C."/>
        </authorList>
    </citation>
    <scope>NUCLEOTIDE SEQUENCE [LARGE SCALE GENOMIC DNA]</scope>
</reference>
<reference key="2">
    <citation type="journal article" date="2001" name="J. Biol. Chem.">
        <title>Characterization of a cluster of human high/ultrahigh sulfur keratin-associated protein genes embedded in the type I keratin gene domain on chromosome 17q12-21.</title>
        <authorList>
            <person name="Rogers M.A."/>
            <person name="Langbein L."/>
            <person name="Winter H."/>
            <person name="Ehmann C."/>
            <person name="Praetzel S."/>
            <person name="Korn B."/>
            <person name="Schweizer J."/>
        </authorList>
    </citation>
    <scope>NUCLEOTIDE SEQUENCE [MRNA] OF 98-195</scope>
    <source>
        <tissue>Scalp</tissue>
    </source>
</reference>
<reference key="3">
    <citation type="journal article" date="2005" name="J. Invest. Dermatol.">
        <title>Size polymorphisms in the human ultrahigh sulfur hair keratin-associated protein 4, KAP4, gene family.</title>
        <authorList>
            <person name="Kariya N."/>
            <person name="Shimomura Y."/>
            <person name="Ito M."/>
        </authorList>
    </citation>
    <scope>TISSUE SPECIFICITY</scope>
    <scope>POLYMORPHISM</scope>
    <scope>VARIANTS CYS-CYS-LEU-THR-THR-CYS-CYS-ARG-THR-THR-CYS-CYS-ARG-PRO-SER-CYS-CYS-ILE-SER-SER-CYS-CYS-ARG-PRO-SER-CYS-CYS-ILE-SER-SER-CYS-CYS-LYS-PRO-SER-64 INS AND 104-CYS--SER-133 DEL</scope>
</reference>
<name>KRA43_HUMAN</name>
<gene>
    <name type="primary">KRTAP4-3</name>
    <name type="synonym">KAP4.3</name>
    <name type="synonym">KRTAP4.3</name>
</gene>
<sequence>MVSSCCGSVCSDQSCGQGLGQESCCRPSCCQTTCCRTTCCRPSCCISSCCRPSCCISSCCKPSCCRTTCCRPSCCISSCCRPSCCISSCCKPSCCRTTCCRPSCCISSCCRPSCCISSCCKPSCCQTTCCRPSCCISSCYRPQCCQPSCCRPACCISSCCHPSCCVSSCRCPFSCPTTCCRTTCFHPICCGSSCC</sequence>
<evidence type="ECO:0000269" key="1">
    <source>
    </source>
</evidence>
<evidence type="ECO:0000305" key="2"/>
<comment type="function">
    <text>In the hair cortex, hair keratin intermediate filaments are embedded in an interfilamentous matrix, consisting of hair keratin-associated proteins (KRTAP), which are essential for the formation of a rigid and resistant hair shaft through their extensive disulfide bond cross-linking with abundant cysteine residues of hair keratins. The matrix proteins include the high-sulfur and high-glycine-tyrosine keratins.</text>
</comment>
<comment type="subunit">
    <text>Interacts with hair keratins.</text>
</comment>
<comment type="tissue specificity">
    <text evidence="1">Expressed specifically in the middle/uper portions of the hair cortex. Not detected in the hair matrix or cuticle.</text>
</comment>
<comment type="polymorphism">
    <text evidence="1">Numerous size polymorphism are present in KRTAP4 gene family, which are mainly due to variations in the sequence encoding cysteine-rich repeat segments (PubMed:15955084).</text>
</comment>
<comment type="similarity">
    <text evidence="2">Belongs to the KRTAP type 4 family.</text>
</comment>
<protein>
    <recommendedName>
        <fullName>Keratin-associated protein 4-3</fullName>
    </recommendedName>
    <alternativeName>
        <fullName>Keratin-associated protein 4.3</fullName>
    </alternativeName>
    <alternativeName>
        <fullName>Ultrahigh sulfur keratin-associated protein 4.3</fullName>
    </alternativeName>
</protein>
<proteinExistence type="evidence at protein level"/>
<feature type="chain" id="PRO_0000185171" description="Keratin-associated protein 4-3">
    <location>
        <begin position="1"/>
        <end position="195"/>
    </location>
</feature>
<feature type="repeat" description="1">
    <location>
        <begin position="34"/>
        <end position="38"/>
    </location>
</feature>
<feature type="repeat" description="2">
    <location>
        <begin position="39"/>
        <end position="43"/>
    </location>
</feature>
<feature type="repeat" description="3">
    <location>
        <begin position="44"/>
        <end position="48"/>
    </location>
</feature>
<feature type="repeat" description="4">
    <location>
        <begin position="49"/>
        <end position="53"/>
    </location>
</feature>
<feature type="repeat" description="5">
    <location>
        <begin position="54"/>
        <end position="58"/>
    </location>
</feature>
<feature type="repeat" description="6">
    <location>
        <begin position="59"/>
        <end position="63"/>
    </location>
</feature>
<feature type="repeat" description="7">
    <location>
        <begin position="64"/>
        <end position="68"/>
    </location>
</feature>
<feature type="repeat" description="8">
    <location>
        <begin position="69"/>
        <end position="73"/>
    </location>
</feature>
<feature type="repeat" description="9">
    <location>
        <begin position="74"/>
        <end position="78"/>
    </location>
</feature>
<feature type="repeat" description="10">
    <location>
        <begin position="79"/>
        <end position="83"/>
    </location>
</feature>
<feature type="repeat" description="11">
    <location>
        <begin position="84"/>
        <end position="88"/>
    </location>
</feature>
<feature type="repeat" description="12">
    <location>
        <begin position="89"/>
        <end position="93"/>
    </location>
</feature>
<feature type="repeat" description="13">
    <location>
        <begin position="94"/>
        <end position="98"/>
    </location>
</feature>
<feature type="repeat" description="14">
    <location>
        <begin position="99"/>
        <end position="103"/>
    </location>
</feature>
<feature type="repeat" description="15">
    <location>
        <begin position="104"/>
        <end position="108"/>
    </location>
</feature>
<feature type="repeat" description="16">
    <location>
        <begin position="109"/>
        <end position="113"/>
    </location>
</feature>
<feature type="repeat" description="17">
    <location>
        <begin position="114"/>
        <end position="118"/>
    </location>
</feature>
<feature type="repeat" description="18">
    <location>
        <begin position="119"/>
        <end position="123"/>
    </location>
</feature>
<feature type="repeat" description="19">
    <location>
        <begin position="124"/>
        <end position="128"/>
    </location>
</feature>
<feature type="repeat" description="20">
    <location>
        <begin position="129"/>
        <end position="133"/>
    </location>
</feature>
<feature type="repeat" description="21">
    <location>
        <begin position="134"/>
        <end position="138"/>
    </location>
</feature>
<feature type="repeat" description="22">
    <location>
        <begin position="144"/>
        <end position="148"/>
    </location>
</feature>
<feature type="repeat" description="23">
    <location>
        <begin position="149"/>
        <end position="153"/>
    </location>
</feature>
<feature type="repeat" description="24">
    <location>
        <begin position="154"/>
        <end position="158"/>
    </location>
</feature>
<feature type="repeat" description="25">
    <location>
        <begin position="159"/>
        <end position="163"/>
    </location>
</feature>
<feature type="repeat" description="26">
    <location>
        <begin position="164"/>
        <end position="168"/>
    </location>
</feature>
<feature type="repeat" description="27">
    <location>
        <begin position="179"/>
        <end position="183"/>
    </location>
</feature>
<feature type="repeat" description="28">
    <location>
        <begin position="189"/>
        <end position="193"/>
    </location>
</feature>
<feature type="region of interest" description="29 X 5 AA repeats of C-C-[GIKRQVH]-[SPT]-[STA]">
    <location>
        <begin position="34"/>
        <end position="193"/>
    </location>
</feature>
<feature type="sequence variant" id="VAR_064557" description="In allele KAP3-v1." evidence="1">
    <original>C</original>
    <variation>CCCLTTCCRTTCCRPSCCISSCCRPSCCISSCCKPS</variation>
    <location>
        <position position="64"/>
    </location>
</feature>
<feature type="sequence variant" id="VAR_064558" description="In allele KAP3-v2." evidence="1">
    <location>
        <begin position="104"/>
        <end position="133"/>
    </location>
</feature>
<feature type="sequence variant" id="VAR_053457" description="In dbSNP:rs428371.">
    <original>P</original>
    <variation>S</variation>
    <location>
        <position position="122"/>
    </location>
</feature>
<feature type="sequence variant" id="VAR_053458" description="In dbSNP:rs428371.">
    <original>P</original>
    <variation>S</variation>
    <location>
        <position position="152"/>
    </location>
</feature>
<organism>
    <name type="scientific">Homo sapiens</name>
    <name type="common">Human</name>
    <dbReference type="NCBI Taxonomy" id="9606"/>
    <lineage>
        <taxon>Eukaryota</taxon>
        <taxon>Metazoa</taxon>
        <taxon>Chordata</taxon>
        <taxon>Craniata</taxon>
        <taxon>Vertebrata</taxon>
        <taxon>Euteleostomi</taxon>
        <taxon>Mammalia</taxon>
        <taxon>Eutheria</taxon>
        <taxon>Euarchontoglires</taxon>
        <taxon>Primates</taxon>
        <taxon>Haplorrhini</taxon>
        <taxon>Catarrhini</taxon>
        <taxon>Hominidae</taxon>
        <taxon>Homo</taxon>
    </lineage>
</organism>
<keyword id="KW-0416">Keratin</keyword>
<keyword id="KW-1267">Proteomics identification</keyword>
<keyword id="KW-1185">Reference proteome</keyword>
<keyword id="KW-0677">Repeat</keyword>